<organism>
    <name type="scientific">Saccharomyces cerevisiae (strain ATCC 204508 / S288c)</name>
    <name type="common">Baker's yeast</name>
    <dbReference type="NCBI Taxonomy" id="559292"/>
    <lineage>
        <taxon>Eukaryota</taxon>
        <taxon>Fungi</taxon>
        <taxon>Dikarya</taxon>
        <taxon>Ascomycota</taxon>
        <taxon>Saccharomycotina</taxon>
        <taxon>Saccharomycetes</taxon>
        <taxon>Saccharomycetales</taxon>
        <taxon>Saccharomycetaceae</taxon>
        <taxon>Saccharomyces</taxon>
    </lineage>
</organism>
<evidence type="ECO:0000250" key="1">
    <source>
        <dbReference type="UniProtKB" id="P12688"/>
    </source>
</evidence>
<evidence type="ECO:0000255" key="2">
    <source>
        <dbReference type="PROSITE-ProRule" id="PRU00159"/>
    </source>
</evidence>
<evidence type="ECO:0000255" key="3">
    <source>
        <dbReference type="PROSITE-ProRule" id="PRU00618"/>
    </source>
</evidence>
<evidence type="ECO:0000255" key="4">
    <source>
        <dbReference type="PROSITE-ProRule" id="PRU10027"/>
    </source>
</evidence>
<evidence type="ECO:0000256" key="5">
    <source>
        <dbReference type="SAM" id="MobiDB-lite"/>
    </source>
</evidence>
<evidence type="ECO:0000269" key="6">
    <source>
    </source>
</evidence>
<evidence type="ECO:0000269" key="7">
    <source>
    </source>
</evidence>
<evidence type="ECO:0000269" key="8">
    <source>
    </source>
</evidence>
<evidence type="ECO:0000269" key="9">
    <source>
    </source>
</evidence>
<evidence type="ECO:0000269" key="10">
    <source>
    </source>
</evidence>
<evidence type="ECO:0000269" key="11">
    <source>
    </source>
</evidence>
<evidence type="ECO:0000269" key="12">
    <source>
    </source>
</evidence>
<evidence type="ECO:0000305" key="13"/>
<evidence type="ECO:0007744" key="14">
    <source>
    </source>
</evidence>
<evidence type="ECO:0007744" key="15">
    <source>
    </source>
</evidence>
<evidence type="ECO:0007744" key="16">
    <source>
    </source>
</evidence>
<protein>
    <recommendedName>
        <fullName>Serine/threonine-protein kinase YPK2/YKR2</fullName>
        <ecNumber>2.7.11.1</ecNumber>
    </recommendedName>
</protein>
<comment type="function">
    <text evidence="6 10 11 12">Plays an essential role in the proliferation of yeast cells (PubMed:8437590). Involved in a signaling pathway, required for optimal cell wall integrity, that acts in parallel with the PKC1-SLT2-dependent pathway (PubMed:12221112). A substrate of TOR complex 2 (TORC2) and required for TORC2 to regulate spatial aspects of cell growth (PubMed:16055732). Phosphorylation of residue Thr-501 is indispensable for function. May act as a downstream kinase in the sphingolipid-mediated signaling pathway (PubMed:39490931).</text>
</comment>
<comment type="catalytic activity">
    <reaction>
        <text>L-seryl-[protein] + ATP = O-phospho-L-seryl-[protein] + ADP + H(+)</text>
        <dbReference type="Rhea" id="RHEA:17989"/>
        <dbReference type="Rhea" id="RHEA-COMP:9863"/>
        <dbReference type="Rhea" id="RHEA-COMP:11604"/>
        <dbReference type="ChEBI" id="CHEBI:15378"/>
        <dbReference type="ChEBI" id="CHEBI:29999"/>
        <dbReference type="ChEBI" id="CHEBI:30616"/>
        <dbReference type="ChEBI" id="CHEBI:83421"/>
        <dbReference type="ChEBI" id="CHEBI:456216"/>
        <dbReference type="EC" id="2.7.11.1"/>
    </reaction>
</comment>
<comment type="catalytic activity">
    <reaction>
        <text>L-threonyl-[protein] + ATP = O-phospho-L-threonyl-[protein] + ADP + H(+)</text>
        <dbReference type="Rhea" id="RHEA:46608"/>
        <dbReference type="Rhea" id="RHEA-COMP:11060"/>
        <dbReference type="Rhea" id="RHEA-COMP:11605"/>
        <dbReference type="ChEBI" id="CHEBI:15378"/>
        <dbReference type="ChEBI" id="CHEBI:30013"/>
        <dbReference type="ChEBI" id="CHEBI:30616"/>
        <dbReference type="ChEBI" id="CHEBI:61977"/>
        <dbReference type="ChEBI" id="CHEBI:456216"/>
        <dbReference type="EC" id="2.7.11.1"/>
    </reaction>
</comment>
<comment type="activity regulation">
    <text>Activated by phytosphingosine (PHS), a sphingoid long chain base. Activated by PKH2 phosphorylation. Kinase activity is regulated by TOR2 via direct phosphorylation of Ser-641 and Thr-659.</text>
</comment>
<comment type="subcellular location">
    <subcellularLocation>
        <location evidence="6 7">Cytoplasm</location>
    </subcellularLocation>
</comment>
<comment type="PTM">
    <text evidence="1 6 10">Autophosphorylated (By similarity). Phosphorylated by PKH2 and TOR2.</text>
</comment>
<comment type="miscellaneous">
    <text evidence="8">Present with 1310 molecules/cell in log phase SD medium.</text>
</comment>
<comment type="similarity">
    <text evidence="13">Belongs to the protein kinase superfamily. AGC Ser/Thr protein kinase family. RAC subfamily.</text>
</comment>
<proteinExistence type="evidence at protein level"/>
<reference key="1">
    <citation type="journal article" date="1989" name="Gene">
        <title>A novel yeast gene coding for a putative protein kinase.</title>
        <authorList>
            <person name="Kubo K."/>
            <person name="Ohno S."/>
            <person name="Matsumoto S."/>
            <person name="Yahara I."/>
            <person name="Suzuki K."/>
        </authorList>
    </citation>
    <scope>NUCLEOTIDE SEQUENCE [GENOMIC DNA]</scope>
</reference>
<reference key="2">
    <citation type="journal article" date="1993" name="Mol. Gen. Genet.">
        <title>A pair of putative protein kinase genes (YPK1 and YPK2) is required for cell growth in Saccharomyces cerevisiae.</title>
        <authorList>
            <person name="Chen P.C."/>
            <person name="Lee K.S."/>
            <person name="Levin D.E."/>
        </authorList>
    </citation>
    <scope>NUCLEOTIDE SEQUENCE [GENOMIC DNA]</scope>
    <scope>FUNCTION</scope>
</reference>
<reference key="3">
    <citation type="journal article" date="1997" name="Nature">
        <title>The nucleotide sequence of Saccharomyces cerevisiae chromosome XIII.</title>
        <authorList>
            <person name="Bowman S."/>
            <person name="Churcher C.M."/>
            <person name="Badcock K."/>
            <person name="Brown D."/>
            <person name="Chillingworth T."/>
            <person name="Connor R."/>
            <person name="Dedman K."/>
            <person name="Devlin K."/>
            <person name="Gentles S."/>
            <person name="Hamlin N."/>
            <person name="Hunt S."/>
            <person name="Jagels K."/>
            <person name="Lye G."/>
            <person name="Moule S."/>
            <person name="Odell C."/>
            <person name="Pearson D."/>
            <person name="Rajandream M.A."/>
            <person name="Rice P."/>
            <person name="Skelton J."/>
            <person name="Walsh S.V."/>
            <person name="Whitehead S."/>
            <person name="Barrell B.G."/>
        </authorList>
    </citation>
    <scope>NUCLEOTIDE SEQUENCE [LARGE SCALE GENOMIC DNA]</scope>
    <source>
        <strain>ATCC 204508 / S288c</strain>
    </source>
</reference>
<reference key="4">
    <citation type="journal article" date="2014" name="G3 (Bethesda)">
        <title>The reference genome sequence of Saccharomyces cerevisiae: Then and now.</title>
        <authorList>
            <person name="Engel S.R."/>
            <person name="Dietrich F.S."/>
            <person name="Fisk D.G."/>
            <person name="Binkley G."/>
            <person name="Balakrishnan R."/>
            <person name="Costanzo M.C."/>
            <person name="Dwight S.S."/>
            <person name="Hitz B.C."/>
            <person name="Karra K."/>
            <person name="Nash R.S."/>
            <person name="Weng S."/>
            <person name="Wong E.D."/>
            <person name="Lloyd P."/>
            <person name="Skrzypek M.S."/>
            <person name="Miyasato S.R."/>
            <person name="Simison M."/>
            <person name="Cherry J.M."/>
        </authorList>
    </citation>
    <scope>GENOME REANNOTATION</scope>
    <source>
        <strain>ATCC 204508 / S288c</strain>
    </source>
</reference>
<reference key="5">
    <citation type="journal article" date="2002" name="Mol. Biol. Cell">
        <title>Pkh1 and Pkh2 differentially phosphorylate and activate Ypk1 and Ykr2 and define protein kinase modules required for maintenance of cell wall integrity.</title>
        <authorList>
            <person name="Roelants F.M."/>
            <person name="Torrance P.D."/>
            <person name="Bezman N."/>
            <person name="Thorner J."/>
        </authorList>
    </citation>
    <scope>FUNCTION</scope>
    <scope>SUBCELLULAR LOCATION</scope>
    <scope>PHOSPHORYLATION BY PKH2</scope>
    <scope>ACTIVATION BY PKH2</scope>
    <scope>MUTAGENESIS OF LYS-373</scope>
</reference>
<reference key="6">
    <citation type="journal article" date="2003" name="Nature">
        <title>Global analysis of protein localization in budding yeast.</title>
        <authorList>
            <person name="Huh W.-K."/>
            <person name="Falvo J.V."/>
            <person name="Gerke L.C."/>
            <person name="Carroll A.S."/>
            <person name="Howson R.W."/>
            <person name="Weissman J.S."/>
            <person name="O'Shea E.K."/>
        </authorList>
    </citation>
    <scope>SUBCELLULAR LOCATION [LARGE SCALE ANALYSIS]</scope>
</reference>
<reference key="7">
    <citation type="journal article" date="2003" name="Nature">
        <title>Global analysis of protein expression in yeast.</title>
        <authorList>
            <person name="Ghaemmaghami S."/>
            <person name="Huh W.-K."/>
            <person name="Bower K."/>
            <person name="Howson R.W."/>
            <person name="Belle A."/>
            <person name="Dephoure N."/>
            <person name="O'Shea E.K."/>
            <person name="Weissman J.S."/>
        </authorList>
    </citation>
    <scope>LEVEL OF PROTEIN EXPRESSION [LARGE SCALE ANALYSIS]</scope>
</reference>
<reference key="8">
    <citation type="journal article" date="2005" name="J. Biol. Chem.">
        <title>The sphingoid long chain base phytosphingosine activates AGC-type protein kinases in Saccharomyces cerevisiae including Ypk1, Ypk2, and Sch9.</title>
        <authorList>
            <person name="Liu K."/>
            <person name="Zhang X."/>
            <person name="Lester R.L."/>
            <person name="Dickson R.C."/>
        </authorList>
    </citation>
    <scope>ACTIVATION BY PHS</scope>
    <scope>MUTAGENESIS OF LYS-373</scope>
</reference>
<reference key="9">
    <citation type="journal article" date="2005" name="Mol. Cell. Biol.">
        <title>Tor2 directly phosphorylates the AGC kinase Ypk2 to regulate actin polarization.</title>
        <authorList>
            <person name="Kamada Y."/>
            <person name="Fujioka Y."/>
            <person name="Suzuki N.N."/>
            <person name="Inagaki F."/>
            <person name="Wullschleger S."/>
            <person name="Loewith R."/>
            <person name="Hall M.N."/>
            <person name="Ohsumi Y."/>
        </authorList>
    </citation>
    <scope>FUNCTION</scope>
    <scope>PHOSPHORYLATION AT THR-501 BY PKH2</scope>
    <scope>PHOSPHORYLATION AT SER-641 AND THR-659 BY TOR2</scope>
    <scope>REGULATION BY TOR2</scope>
    <scope>MUTAGENESIS OF ASP-239; SER-641 AND THR-659</scope>
</reference>
<reference key="10">
    <citation type="journal article" date="2007" name="J. Proteome Res.">
        <title>Large-scale phosphorylation analysis of alpha-factor-arrested Saccharomyces cerevisiae.</title>
        <authorList>
            <person name="Li X."/>
            <person name="Gerber S.A."/>
            <person name="Rudner A.D."/>
            <person name="Beausoleil S.A."/>
            <person name="Haas W."/>
            <person name="Villen J."/>
            <person name="Elias J.E."/>
            <person name="Gygi S.P."/>
        </authorList>
    </citation>
    <scope>PHOSPHORYLATION [LARGE SCALE ANALYSIS] AT SER-641 AND SER-650</scope>
    <scope>IDENTIFICATION BY MASS SPECTROMETRY [LARGE SCALE ANALYSIS]</scope>
    <source>
        <strain>ADR376</strain>
    </source>
</reference>
<reference key="11">
    <citation type="journal article" date="2008" name="Mol. Cell. Proteomics">
        <title>A multidimensional chromatography technology for in-depth phosphoproteome analysis.</title>
        <authorList>
            <person name="Albuquerque C.P."/>
            <person name="Smolka M.B."/>
            <person name="Payne S.H."/>
            <person name="Bafna V."/>
            <person name="Eng J."/>
            <person name="Zhou H."/>
        </authorList>
    </citation>
    <scope>PHOSPHORYLATION [LARGE SCALE ANALYSIS] AT THR-63</scope>
    <scope>IDENTIFICATION BY MASS SPECTROMETRY [LARGE SCALE ANALYSIS]</scope>
</reference>
<reference key="12">
    <citation type="journal article" date="2009" name="Science">
        <title>Global analysis of Cdk1 substrate phosphorylation sites provides insights into evolution.</title>
        <authorList>
            <person name="Holt L.J."/>
            <person name="Tuch B.B."/>
            <person name="Villen J."/>
            <person name="Johnson A.D."/>
            <person name="Gygi S.P."/>
            <person name="Morgan D.O."/>
        </authorList>
    </citation>
    <scope>PHOSPHORYLATION [LARGE SCALE ANALYSIS] AT THR-63; SER-72; THR-499 AND SER-669</scope>
    <scope>IDENTIFICATION BY MASS SPECTROMETRY [LARGE SCALE ANALYSIS]</scope>
</reference>
<reference evidence="13" key="13">
    <citation type="journal article" date="2024" name="J. Lipid Res.">
        <title>Orm proteins control ceramide synthesis and endocytosis via LCB-mediated Ypk1 regulation.</title>
        <authorList>
            <person name="Ren J."/>
            <person name="Rieger R."/>
            <person name="Pereira de Sa N."/>
            <person name="Kelapire D."/>
            <person name="Del Poeta M."/>
            <person name="Hannun Y.A."/>
        </authorList>
    </citation>
    <scope>FUNCTION</scope>
    <scope>MUTAGENESIS OF ASP-239</scope>
</reference>
<feature type="chain" id="PRO_0000086836" description="Serine/threonine-protein kinase YPK2/YKR2">
    <location>
        <begin position="1"/>
        <end position="677"/>
    </location>
</feature>
<feature type="domain" description="Protein kinase" evidence="2">
    <location>
        <begin position="344"/>
        <end position="599"/>
    </location>
</feature>
<feature type="domain" description="AGC-kinase C-terminal" evidence="3">
    <location>
        <begin position="600"/>
        <end position="670"/>
    </location>
</feature>
<feature type="region of interest" description="Disordered" evidence="5">
    <location>
        <begin position="1"/>
        <end position="115"/>
    </location>
</feature>
<feature type="compositionally biased region" description="Basic residues" evidence="5">
    <location>
        <begin position="1"/>
        <end position="12"/>
    </location>
</feature>
<feature type="compositionally biased region" description="Basic and acidic residues" evidence="5">
    <location>
        <begin position="41"/>
        <end position="56"/>
    </location>
</feature>
<feature type="compositionally biased region" description="Polar residues" evidence="5">
    <location>
        <begin position="61"/>
        <end position="93"/>
    </location>
</feature>
<feature type="compositionally biased region" description="Polar residues" evidence="5">
    <location>
        <begin position="101"/>
        <end position="115"/>
    </location>
</feature>
<feature type="active site" description="Proton acceptor" evidence="2 4">
    <location>
        <position position="467"/>
    </location>
</feature>
<feature type="binding site" evidence="2">
    <location>
        <begin position="350"/>
        <end position="358"/>
    </location>
    <ligand>
        <name>ATP</name>
        <dbReference type="ChEBI" id="CHEBI:30616"/>
    </ligand>
</feature>
<feature type="binding site" evidence="2">
    <location>
        <position position="373"/>
    </location>
    <ligand>
        <name>ATP</name>
        <dbReference type="ChEBI" id="CHEBI:30616"/>
    </ligand>
</feature>
<feature type="modified residue" description="Phosphothreonine" evidence="15 16">
    <location>
        <position position="63"/>
    </location>
</feature>
<feature type="modified residue" description="Phosphothreonine" evidence="1">
    <location>
        <position position="66"/>
    </location>
</feature>
<feature type="modified residue" description="Phosphoserine" evidence="16">
    <location>
        <position position="72"/>
    </location>
</feature>
<feature type="modified residue" description="Phosphothreonine" evidence="16">
    <location>
        <position position="499"/>
    </location>
</feature>
<feature type="modified residue" description="Phosphothreonine; by PKH2" evidence="10">
    <location>
        <position position="501"/>
    </location>
</feature>
<feature type="modified residue" description="Phosphoserine; by TOR2" evidence="10 14">
    <location>
        <position position="641"/>
    </location>
</feature>
<feature type="modified residue" description="Phosphoserine" evidence="14">
    <location>
        <position position="650"/>
    </location>
</feature>
<feature type="modified residue" description="Phosphothreonine; by TOR2" evidence="10">
    <location>
        <position position="659"/>
    </location>
</feature>
<feature type="modified residue" description="Phosphoserine" evidence="16">
    <location>
        <position position="669"/>
    </location>
</feature>
<feature type="mutagenesis site" description="Rescues growth of cells compromised in TORC2, but not TORC1 function. Restores SLT2 activation and suppresses actin cytoskeleton organization defect in TOR2 mutant cells. Rescues the defects of the ORM1 and ORM2 double knockout mutant background including defects in LAC1 phosphorylation, endocytosis, and actin patches distribution." evidence="10 11">
    <original>D</original>
    <variation>A</variation>
    <location>
        <position position="239"/>
    </location>
</feature>
<feature type="mutagenesis site" description="No kinase activity." evidence="6 9">
    <original>K</original>
    <variation>R</variation>
    <variation>A</variation>
    <location>
        <position position="373"/>
    </location>
</feature>
<feature type="mutagenesis site" description="Reduced kinase activity; when associated with A-659." evidence="10">
    <original>S</original>
    <variation>A</variation>
    <location>
        <position position="641"/>
    </location>
</feature>
<feature type="mutagenesis site" description="Reduced kinase activity; when associated with A-641." evidence="10">
    <original>T</original>
    <variation>A</variation>
    <location>
        <position position="659"/>
    </location>
</feature>
<gene>
    <name type="primary">YPK2</name>
    <name type="synonym">YKR2</name>
    <name type="ordered locus">YMR104C</name>
    <name type="ORF">YM9718.03C</name>
</gene>
<accession>P18961</accession>
<accession>D6VZS6</accession>
<keyword id="KW-0067">ATP-binding</keyword>
<keyword id="KW-0133">Cell shape</keyword>
<keyword id="KW-0961">Cell wall biogenesis/degradation</keyword>
<keyword id="KW-0963">Cytoplasm</keyword>
<keyword id="KW-0418">Kinase</keyword>
<keyword id="KW-0443">Lipid metabolism</keyword>
<keyword id="KW-0547">Nucleotide-binding</keyword>
<keyword id="KW-0597">Phosphoprotein</keyword>
<keyword id="KW-1185">Reference proteome</keyword>
<keyword id="KW-0723">Serine/threonine-protein kinase</keyword>
<keyword id="KW-0746">Sphingolipid metabolism</keyword>
<keyword id="KW-0808">Transferase</keyword>
<sequence length="677" mass="76664">MHSWRISKFKLGRSKEDDGSSEDENEKSWGNGLFHFHHGEKHHDGSPKNHNHEHEHHIRKINTNETLPSSLSSPKLRNDASFKNPSGIGNDNSKASERKASQSSTETQGPSSESGLMTVKVYSGKDFTLPFPITSNSTILQKLLSSGILTSSSNDASEVAAIMRQLPRYKRVDQDSAGEGLIDRAFATKFIPSSILLPGSTNSSPLLYFTIEFDNSITTISPDMGTMEQPVFNKISTFDVTRKLRFLKIDVFARIPSLLLPSKNWQQEIGEQDEVLKEILKKINTNQDIHLDSFHLPLNLKIDSAAQIRLYNHHWISLERGYGKLNITVDYKPSKNKPLSIDDFDLLKVIGKGSFGKVMQVRKKDTQKIYALKALRKAYIVSKCEVTHTLAERTVLARVDCPFIVPLKFSFQSPEKLYLVLAFINGGELFYHLQHEGRFSLARSRFYIAELLCALDSLHKLDVIYRDLKPENILLDYQGHIALCDFGLCKLNMKDNDKTDTFCGTPEYLAPEILLGQGYTKTVDWWTLGILLYEMMTGLPPYYDENVPVMYKKILQQPLLFPDGFDPAAKDLLIGLLSRDPSRRLGVNGTDEIRNHPFFKDISWKKLLLKGYIPPYKPIVKSEIDTANFDQEFTKEKPIDSVVDEYLSASIQKQFGGWTYIGDEQLGDSPSQGRSIS</sequence>
<dbReference type="EC" id="2.7.11.1"/>
<dbReference type="EMBL" id="M24929">
    <property type="protein sequence ID" value="AAA78259.1"/>
    <property type="molecule type" value="Genomic_DNA"/>
</dbReference>
<dbReference type="EMBL" id="Z49702">
    <property type="protein sequence ID" value="CAA89740.1"/>
    <property type="molecule type" value="Genomic_DNA"/>
</dbReference>
<dbReference type="EMBL" id="BK006946">
    <property type="protein sequence ID" value="DAA10000.1"/>
    <property type="molecule type" value="Genomic_DNA"/>
</dbReference>
<dbReference type="PIR" id="JS0178">
    <property type="entry name" value="JS0178"/>
</dbReference>
<dbReference type="RefSeq" id="NP_013822.1">
    <property type="nucleotide sequence ID" value="NM_001182604.1"/>
</dbReference>
<dbReference type="SMR" id="P18961"/>
<dbReference type="BioGRID" id="35279">
    <property type="interactions" value="129"/>
</dbReference>
<dbReference type="DIP" id="DIP-4438N"/>
<dbReference type="FunCoup" id="P18961">
    <property type="interactions" value="366"/>
</dbReference>
<dbReference type="IntAct" id="P18961">
    <property type="interactions" value="20"/>
</dbReference>
<dbReference type="MINT" id="P18961"/>
<dbReference type="STRING" id="4932.YMR104C"/>
<dbReference type="iPTMnet" id="P18961"/>
<dbReference type="PaxDb" id="4932-YMR104C"/>
<dbReference type="PeptideAtlas" id="P18961"/>
<dbReference type="EnsemblFungi" id="YMR104C_mRNA">
    <property type="protein sequence ID" value="YMR104C"/>
    <property type="gene ID" value="YMR104C"/>
</dbReference>
<dbReference type="GeneID" id="855130"/>
<dbReference type="KEGG" id="sce:YMR104C"/>
<dbReference type="AGR" id="SGD:S000004710"/>
<dbReference type="SGD" id="S000004710">
    <property type="gene designation" value="YPK2"/>
</dbReference>
<dbReference type="VEuPathDB" id="FungiDB:YMR104C"/>
<dbReference type="eggNOG" id="KOG0598">
    <property type="taxonomic scope" value="Eukaryota"/>
</dbReference>
<dbReference type="GeneTree" id="ENSGT00940000175269"/>
<dbReference type="HOGENOM" id="CLU_000288_120_2_1"/>
<dbReference type="InParanoid" id="P18961"/>
<dbReference type="OMA" id="HEHEHHI"/>
<dbReference type="OrthoDB" id="63267at2759"/>
<dbReference type="BioCyc" id="YEAST:G3O-32802-MONOMER"/>
<dbReference type="BRENDA" id="2.7.11.1">
    <property type="organism ID" value="984"/>
</dbReference>
<dbReference type="BioGRID-ORCS" id="855130">
    <property type="hits" value="0 hits in 13 CRISPR screens"/>
</dbReference>
<dbReference type="PRO" id="PR:P18961"/>
<dbReference type="Proteomes" id="UP000002311">
    <property type="component" value="Chromosome XIII"/>
</dbReference>
<dbReference type="RNAct" id="P18961">
    <property type="molecule type" value="protein"/>
</dbReference>
<dbReference type="GO" id="GO:0005737">
    <property type="term" value="C:cytoplasm"/>
    <property type="evidence" value="ECO:0007005"/>
    <property type="project" value="SGD"/>
</dbReference>
<dbReference type="GO" id="GO:0005634">
    <property type="term" value="C:nucleus"/>
    <property type="evidence" value="ECO:0000314"/>
    <property type="project" value="SGD"/>
</dbReference>
<dbReference type="GO" id="GO:0005524">
    <property type="term" value="F:ATP binding"/>
    <property type="evidence" value="ECO:0007669"/>
    <property type="project" value="UniProtKB-KW"/>
</dbReference>
<dbReference type="GO" id="GO:0106310">
    <property type="term" value="F:protein serine kinase activity"/>
    <property type="evidence" value="ECO:0007669"/>
    <property type="project" value="RHEA"/>
</dbReference>
<dbReference type="GO" id="GO:0004674">
    <property type="term" value="F:protein serine/threonine kinase activity"/>
    <property type="evidence" value="ECO:0000314"/>
    <property type="project" value="SGD"/>
</dbReference>
<dbReference type="GO" id="GO:0071555">
    <property type="term" value="P:cell wall organization"/>
    <property type="evidence" value="ECO:0007669"/>
    <property type="project" value="UniProtKB-KW"/>
</dbReference>
<dbReference type="GO" id="GO:0070941">
    <property type="term" value="P:eisosome assembly"/>
    <property type="evidence" value="ECO:0000316"/>
    <property type="project" value="SGD"/>
</dbReference>
<dbReference type="GO" id="GO:0008360">
    <property type="term" value="P:regulation of cell shape"/>
    <property type="evidence" value="ECO:0007669"/>
    <property type="project" value="UniProtKB-KW"/>
</dbReference>
<dbReference type="GO" id="GO:0060237">
    <property type="term" value="P:regulation of fungal-type cell wall organization"/>
    <property type="evidence" value="ECO:0000316"/>
    <property type="project" value="SGD"/>
</dbReference>
<dbReference type="CDD" id="cd11651">
    <property type="entry name" value="YPK1_N_like"/>
    <property type="match status" value="1"/>
</dbReference>
<dbReference type="FunFam" id="1.10.510.10:FF:000008">
    <property type="entry name" value="Non-specific serine/threonine protein kinase"/>
    <property type="match status" value="1"/>
</dbReference>
<dbReference type="FunFam" id="3.30.200.20:FF:000048">
    <property type="entry name" value="Non-specific serine/threonine protein kinase"/>
    <property type="match status" value="1"/>
</dbReference>
<dbReference type="Gene3D" id="3.30.200.20">
    <property type="entry name" value="Phosphorylase Kinase, domain 1"/>
    <property type="match status" value="1"/>
</dbReference>
<dbReference type="Gene3D" id="1.10.510.10">
    <property type="entry name" value="Transferase(Phosphotransferase) domain 1"/>
    <property type="match status" value="1"/>
</dbReference>
<dbReference type="InterPro" id="IPR000961">
    <property type="entry name" value="AGC-kinase_C"/>
</dbReference>
<dbReference type="InterPro" id="IPR011009">
    <property type="entry name" value="Kinase-like_dom_sf"/>
</dbReference>
<dbReference type="InterPro" id="IPR017892">
    <property type="entry name" value="Pkinase_C"/>
</dbReference>
<dbReference type="InterPro" id="IPR000719">
    <property type="entry name" value="Prot_kinase_dom"/>
</dbReference>
<dbReference type="InterPro" id="IPR017441">
    <property type="entry name" value="Protein_kinase_ATP_BS"/>
</dbReference>
<dbReference type="InterPro" id="IPR008271">
    <property type="entry name" value="Ser/Thr_kinase_AS"/>
</dbReference>
<dbReference type="PANTHER" id="PTHR24351">
    <property type="entry name" value="RIBOSOMAL PROTEIN S6 KINASE"/>
    <property type="match status" value="1"/>
</dbReference>
<dbReference type="Pfam" id="PF00069">
    <property type="entry name" value="Pkinase"/>
    <property type="match status" value="1"/>
</dbReference>
<dbReference type="Pfam" id="PF00433">
    <property type="entry name" value="Pkinase_C"/>
    <property type="match status" value="1"/>
</dbReference>
<dbReference type="SMART" id="SM00133">
    <property type="entry name" value="S_TK_X"/>
    <property type="match status" value="1"/>
</dbReference>
<dbReference type="SMART" id="SM00220">
    <property type="entry name" value="S_TKc"/>
    <property type="match status" value="1"/>
</dbReference>
<dbReference type="SUPFAM" id="SSF56112">
    <property type="entry name" value="Protein kinase-like (PK-like)"/>
    <property type="match status" value="1"/>
</dbReference>
<dbReference type="PROSITE" id="PS51285">
    <property type="entry name" value="AGC_KINASE_CTER"/>
    <property type="match status" value="1"/>
</dbReference>
<dbReference type="PROSITE" id="PS00107">
    <property type="entry name" value="PROTEIN_KINASE_ATP"/>
    <property type="match status" value="1"/>
</dbReference>
<dbReference type="PROSITE" id="PS50011">
    <property type="entry name" value="PROTEIN_KINASE_DOM"/>
    <property type="match status" value="1"/>
</dbReference>
<dbReference type="PROSITE" id="PS00108">
    <property type="entry name" value="PROTEIN_KINASE_ST"/>
    <property type="match status" value="1"/>
</dbReference>
<name>YPK2_YEAST</name>